<reference key="1">
    <citation type="submission" date="2008-02" db="EMBL/GenBank/DDBJ databases">
        <authorList>
            <consortium name="NIH - Xenopus Gene Collection (XGC) project"/>
        </authorList>
    </citation>
    <scope>NUCLEOTIDE SEQUENCE [LARGE SCALE MRNA]</scope>
    <source>
        <tissue>Brain</tissue>
    </source>
</reference>
<proteinExistence type="evidence at transcript level"/>
<dbReference type="EMBL" id="BC159131">
    <property type="protein sequence ID" value="AAI59132.1"/>
    <property type="molecule type" value="mRNA"/>
</dbReference>
<dbReference type="RefSeq" id="NP_001120142.1">
    <property type="nucleotide sequence ID" value="NM_001126670.1"/>
</dbReference>
<dbReference type="SMR" id="B0JZD0"/>
<dbReference type="FunCoup" id="B0JZD0">
    <property type="interactions" value="559"/>
</dbReference>
<dbReference type="STRING" id="8364.ENSXETP00000011591"/>
<dbReference type="GlyCosmos" id="B0JZD0">
    <property type="glycosylation" value="4 sites, No reported glycans"/>
</dbReference>
<dbReference type="GeneID" id="100145179"/>
<dbReference type="KEGG" id="xtr:100145179"/>
<dbReference type="AGR" id="Xenbase:XB-GENE-987953"/>
<dbReference type="CTD" id="204962"/>
<dbReference type="Xenbase" id="XB-GENE-987953">
    <property type="gene designation" value="slc44a5"/>
</dbReference>
<dbReference type="InParanoid" id="B0JZD0"/>
<dbReference type="OrthoDB" id="420519at2759"/>
<dbReference type="Reactome" id="R-XTR-1483191">
    <property type="pathway name" value="Synthesis of PC"/>
</dbReference>
<dbReference type="Reactome" id="R-XTR-425366">
    <property type="pathway name" value="Transport of bile salts and organic acids, metal ions and amine compounds"/>
</dbReference>
<dbReference type="Proteomes" id="UP000008143">
    <property type="component" value="Chromosome 4"/>
</dbReference>
<dbReference type="GO" id="GO:0005886">
    <property type="term" value="C:plasma membrane"/>
    <property type="evidence" value="ECO:0000250"/>
    <property type="project" value="UniProtKB"/>
</dbReference>
<dbReference type="GO" id="GO:0015297">
    <property type="term" value="F:antiporter activity"/>
    <property type="evidence" value="ECO:0007669"/>
    <property type="project" value="UniProtKB-KW"/>
</dbReference>
<dbReference type="GO" id="GO:0015220">
    <property type="term" value="F:choline transmembrane transporter activity"/>
    <property type="evidence" value="ECO:0000250"/>
    <property type="project" value="UniProtKB"/>
</dbReference>
<dbReference type="GO" id="GO:0015871">
    <property type="term" value="P:choline transport"/>
    <property type="evidence" value="ECO:0000250"/>
    <property type="project" value="UniProtKB"/>
</dbReference>
<dbReference type="InterPro" id="IPR007603">
    <property type="entry name" value="Choline_transptr-like"/>
</dbReference>
<dbReference type="PANTHER" id="PTHR12385">
    <property type="entry name" value="CHOLINE TRANSPORTER-LIKE (SLC FAMILY 44)"/>
    <property type="match status" value="1"/>
</dbReference>
<dbReference type="PANTHER" id="PTHR12385:SF42">
    <property type="entry name" value="CHOLINE TRANSPORTER-LIKE PROTEIN 5"/>
    <property type="match status" value="1"/>
</dbReference>
<dbReference type="Pfam" id="PF04515">
    <property type="entry name" value="Choline_transpo"/>
    <property type="match status" value="1"/>
</dbReference>
<protein>
    <recommendedName>
        <fullName>Choline transporter-like protein 5</fullName>
    </recommendedName>
    <alternativeName>
        <fullName>Solute carrier family 44 member 5</fullName>
    </alternativeName>
</protein>
<feature type="chain" id="PRO_0000359726" description="Choline transporter-like protein 5">
    <location>
        <begin position="1"/>
        <end position="714"/>
    </location>
</feature>
<feature type="topological domain" description="Cytoplasmic" evidence="2">
    <location>
        <begin position="1"/>
        <end position="33"/>
    </location>
</feature>
<feature type="transmembrane region" description="Helical" evidence="2">
    <location>
        <begin position="34"/>
        <end position="54"/>
    </location>
</feature>
<feature type="topological domain" description="Extracellular" evidence="2">
    <location>
        <begin position="55"/>
        <end position="237"/>
    </location>
</feature>
<feature type="transmembrane region" description="Helical" evidence="2">
    <location>
        <begin position="238"/>
        <end position="258"/>
    </location>
</feature>
<feature type="topological domain" description="Cytoplasmic" evidence="2">
    <location>
        <begin position="259"/>
        <end position="261"/>
    </location>
</feature>
<feature type="transmembrane region" description="Helical" evidence="2">
    <location>
        <begin position="262"/>
        <end position="282"/>
    </location>
</feature>
<feature type="topological domain" description="Extracellular" evidence="2">
    <location>
        <begin position="283"/>
        <end position="320"/>
    </location>
</feature>
<feature type="transmembrane region" description="Helical" evidence="2">
    <location>
        <begin position="321"/>
        <end position="341"/>
    </location>
</feature>
<feature type="topological domain" description="Cytoplasmic" evidence="2">
    <location>
        <begin position="342"/>
        <end position="346"/>
    </location>
</feature>
<feature type="transmembrane region" description="Helical" evidence="2">
    <location>
        <begin position="347"/>
        <end position="367"/>
    </location>
</feature>
<feature type="topological domain" description="Extracellular" evidence="2">
    <location>
        <begin position="368"/>
        <end position="369"/>
    </location>
</feature>
<feature type="transmembrane region" description="Helical" evidence="2">
    <location>
        <begin position="370"/>
        <end position="390"/>
    </location>
</feature>
<feature type="topological domain" description="Cytoplasmic" evidence="2">
    <location>
        <begin position="391"/>
        <end position="455"/>
    </location>
</feature>
<feature type="transmembrane region" description="Helical" evidence="2">
    <location>
        <begin position="456"/>
        <end position="476"/>
    </location>
</feature>
<feature type="topological domain" description="Extracellular" evidence="2">
    <location>
        <begin position="477"/>
        <end position="510"/>
    </location>
</feature>
<feature type="transmembrane region" description="Helical" evidence="2">
    <location>
        <begin position="511"/>
        <end position="531"/>
    </location>
</feature>
<feature type="topological domain" description="Cytoplasmic" evidence="2">
    <location>
        <begin position="532"/>
        <end position="605"/>
    </location>
</feature>
<feature type="transmembrane region" description="Helical" evidence="2">
    <location>
        <begin position="606"/>
        <end position="626"/>
    </location>
</feature>
<feature type="topological domain" description="Extracellular" evidence="2">
    <location>
        <begin position="627"/>
        <end position="644"/>
    </location>
</feature>
<feature type="transmembrane region" description="Helical" evidence="2">
    <location>
        <begin position="645"/>
        <end position="665"/>
    </location>
</feature>
<feature type="topological domain" description="Cytoplasmic" evidence="2">
    <location>
        <begin position="666"/>
        <end position="711"/>
    </location>
</feature>
<feature type="glycosylation site" description="N-linked (GlcNAc...) asparagine" evidence="2">
    <location>
        <position position="83"/>
    </location>
</feature>
<feature type="glycosylation site" description="N-linked (GlcNAc...) asparagine" evidence="2">
    <location>
        <position position="132"/>
    </location>
</feature>
<feature type="glycosylation site" description="N-linked (GlcNAc...) asparagine" evidence="2">
    <location>
        <position position="192"/>
    </location>
</feature>
<feature type="glycosylation site" description="N-linked (GlcNAc...) asparagine" evidence="2">
    <location>
        <position position="205"/>
    </location>
</feature>
<gene>
    <name type="primary">slc44a5</name>
    <name type="synonym">ctl5</name>
</gene>
<evidence type="ECO:0000250" key="1">
    <source>
        <dbReference type="UniProtKB" id="Q8NCS7"/>
    </source>
</evidence>
<evidence type="ECO:0000255" key="2"/>
<evidence type="ECO:0000305" key="3"/>
<organism>
    <name type="scientific">Xenopus tropicalis</name>
    <name type="common">Western clawed frog</name>
    <name type="synonym">Silurana tropicalis</name>
    <dbReference type="NCBI Taxonomy" id="8364"/>
    <lineage>
        <taxon>Eukaryota</taxon>
        <taxon>Metazoa</taxon>
        <taxon>Chordata</taxon>
        <taxon>Craniata</taxon>
        <taxon>Vertebrata</taxon>
        <taxon>Euteleostomi</taxon>
        <taxon>Amphibia</taxon>
        <taxon>Batrachia</taxon>
        <taxon>Anura</taxon>
        <taxon>Pipoidea</taxon>
        <taxon>Pipidae</taxon>
        <taxon>Xenopodinae</taxon>
        <taxon>Xenopus</taxon>
        <taxon>Silurana</taxon>
    </lineage>
</organism>
<sequence>MGRRSAAPTSPFGEPRKFDPKFKGPIGKRHCTDVLCCIIFVVVILGYIALGVVAWIHGDPRKIIYPTDSYGQFCGQKGTPNENKTILMYFNILRCASPVVLINLQCPTTQLCVSKCPDRFATYLDMQANRFNNSYWEYYKQFCKPGFDKPRKSITEVLRDEDCPSMIIPSRPFLQRCFPDFSTRNGVLTVANKTEFKDGIGQMRNVTDLRSAANGINNVLDARSVGMKIFEDYASSWYWILIALFIAMVVSLLFLILLRFTAGVFFWIFIIGVIGVVGYGIWHCFWEYDSLKGVPGADLTIYDIGLQTDFRVYLQLRQTWLAFMILLCIVEVIIILMLIFLRNRIRIAIALLQEGSRAIGYIMSTLFYPIITFILIAICISYWAVTAVFMATSGEPIYKVMANKTLCKYADITCIPETFNTTNVTRLCPGAQCTFAFYGGESFYHQYILIFQLCNVFVFLWLVNFSIALGQCTLAGAFASYYWAFKKPADIPACPLFSSFGRAIRYHTGSLALGSLILALVQFIRIILEYLDHKLKASQNSFAKFILCCLKCCFWCLEKFIKFMNRNAYIMIAIYGKNFCTSAKDAFFLLMRNVIRVAVLDKVTDFLLFLGKVFVTGSVGVLAFFFFTRKIPVLTDEAPALNYYWVPLLTVLIGSYLIAHGFFSVYAMCVDTLFLCFCEDLERNNGSSSKPYYMSPNLHRILGKKEILSKKAKR</sequence>
<name>CTL5_XENTR</name>
<accession>B0JZD0</accession>
<keyword id="KW-0050">Antiport</keyword>
<keyword id="KW-1003">Cell membrane</keyword>
<keyword id="KW-0325">Glycoprotein</keyword>
<keyword id="KW-0472">Membrane</keyword>
<keyword id="KW-1185">Reference proteome</keyword>
<keyword id="KW-0812">Transmembrane</keyword>
<keyword id="KW-1133">Transmembrane helix</keyword>
<keyword id="KW-0813">Transport</keyword>
<comment type="function">
    <text evidence="1">Choline/H+ antiporter.</text>
</comment>
<comment type="catalytic activity">
    <reaction evidence="1">
        <text>choline(out) + n H(+)(in) = choline(in) + n H(+)(out)</text>
        <dbReference type="Rhea" id="RHEA:75463"/>
        <dbReference type="ChEBI" id="CHEBI:15354"/>
        <dbReference type="ChEBI" id="CHEBI:15378"/>
    </reaction>
</comment>
<comment type="subcellular location">
    <subcellularLocation>
        <location evidence="1">Cell membrane</location>
        <topology evidence="2">Multi-pass membrane protein</topology>
    </subcellularLocation>
</comment>
<comment type="similarity">
    <text evidence="3">Belongs to the CTL (choline transporter-like) family.</text>
</comment>